<proteinExistence type="uncertain"/>
<gene>
    <name type="ordered locus">YFR056C</name>
</gene>
<protein>
    <recommendedName>
        <fullName>Putative uncharacterized protein YFR056C</fullName>
    </recommendedName>
</protein>
<keyword id="KW-0472">Membrane</keyword>
<keyword id="KW-0812">Transmembrane</keyword>
<keyword id="KW-1133">Transmembrane helix</keyword>
<organism>
    <name type="scientific">Saccharomyces cerevisiae (strain ATCC 204508 / S288c)</name>
    <name type="common">Baker's yeast</name>
    <dbReference type="NCBI Taxonomy" id="559292"/>
    <lineage>
        <taxon>Eukaryota</taxon>
        <taxon>Fungi</taxon>
        <taxon>Dikarya</taxon>
        <taxon>Ascomycota</taxon>
        <taxon>Saccharomycotina</taxon>
        <taxon>Saccharomycetes</taxon>
        <taxon>Saccharomycetales</taxon>
        <taxon>Saccharomycetaceae</taxon>
        <taxon>Saccharomyces</taxon>
    </lineage>
</organism>
<name>YFM6_YEAST</name>
<sequence length="122" mass="14003">MMVDPLYKGGLTKPLCSSGLRPITDSCVVIPNFDNSVRSIIVVNILVFAGILYSQFRNTLSIFSLWCPNTRAVFLFICPCLLYFYQGIFSTDEQIGTFNIIWMLRRLTIELIIRNLNAEKER</sequence>
<dbReference type="EMBL" id="D50617">
    <property type="protein sequence ID" value="BAA09294.1"/>
    <property type="molecule type" value="Genomic_DNA"/>
</dbReference>
<dbReference type="EMBL" id="AY693240">
    <property type="protein sequence ID" value="AAT93259.1"/>
    <property type="molecule type" value="Genomic_DNA"/>
</dbReference>
<dbReference type="PIR" id="S56310">
    <property type="entry name" value="S56310"/>
</dbReference>
<dbReference type="IntAct" id="P43624">
    <property type="interactions" value="1"/>
</dbReference>
<dbReference type="STRING" id="4932.YFR056C"/>
<dbReference type="PaxDb" id="4932-YFR056C"/>
<dbReference type="EnsemblFungi" id="YFR056C_mRNA">
    <property type="protein sequence ID" value="YFR056C"/>
    <property type="gene ID" value="YFR056C"/>
</dbReference>
<dbReference type="AGR" id="SGD:S000001951"/>
<dbReference type="SGD" id="S000001951">
    <property type="gene designation" value="YFR056C"/>
</dbReference>
<dbReference type="HOGENOM" id="CLU_2028521_0_0_1"/>
<dbReference type="GO" id="GO:0016020">
    <property type="term" value="C:membrane"/>
    <property type="evidence" value="ECO:0007669"/>
    <property type="project" value="UniProtKB-SubCell"/>
</dbReference>
<evidence type="ECO:0000255" key="1"/>
<evidence type="ECO:0000269" key="2">
    <source>
    </source>
</evidence>
<evidence type="ECO:0000305" key="3"/>
<evidence type="ECO:0000305" key="4">
    <source>
    </source>
</evidence>
<accession>P43624</accession>
<reference key="1">
    <citation type="journal article" date="1996" name="Yeast">
        <title>Analysis of a 36.2 kb DNA sequence including the right telomere of chromosome VI from Saccharomyces cerevisiae.</title>
        <authorList>
            <person name="Eki T."/>
            <person name="Naitou M."/>
            <person name="Hagiwara H."/>
            <person name="Ozawa M."/>
            <person name="Sasanuma S."/>
            <person name="Sasanuma M."/>
            <person name="Tsuchiya Y."/>
            <person name="Shibata T."/>
            <person name="Hanaoka F."/>
            <person name="Murakami Y."/>
        </authorList>
    </citation>
    <scope>NUCLEOTIDE SEQUENCE [GENOMIC DNA]</scope>
    <source>
        <strain>ATCC 204511 / S288c / AB972</strain>
    </source>
</reference>
<reference key="2">
    <citation type="journal article" date="1995" name="Nat. Genet.">
        <title>Analysis of the nucleotide sequence of chromosome VI from Saccharomyces cerevisiae.</title>
        <authorList>
            <person name="Murakami Y."/>
            <person name="Naitou M."/>
            <person name="Hagiwara H."/>
            <person name="Shibata T."/>
            <person name="Ozawa M."/>
            <person name="Sasanuma S."/>
            <person name="Sasanuma M."/>
            <person name="Tsuchiya Y."/>
            <person name="Soeda E."/>
            <person name="Yokoyama K."/>
            <person name="Yamazaki M."/>
            <person name="Tashiro H."/>
            <person name="Eki T."/>
        </authorList>
    </citation>
    <scope>NUCLEOTIDE SEQUENCE [LARGE SCALE GENOMIC DNA]</scope>
    <source>
        <strain>ATCC 204508 / S288c</strain>
    </source>
</reference>
<reference key="3">
    <citation type="journal article" date="2014" name="G3 (Bethesda)">
        <title>The reference genome sequence of Saccharomyces cerevisiae: Then and now.</title>
        <authorList>
            <person name="Engel S.R."/>
            <person name="Dietrich F.S."/>
            <person name="Fisk D.G."/>
            <person name="Binkley G."/>
            <person name="Balakrishnan R."/>
            <person name="Costanzo M.C."/>
            <person name="Dwight S.S."/>
            <person name="Hitz B.C."/>
            <person name="Karra K."/>
            <person name="Nash R.S."/>
            <person name="Weng S."/>
            <person name="Wong E.D."/>
            <person name="Lloyd P."/>
            <person name="Skrzypek M.S."/>
            <person name="Miyasato S.R."/>
            <person name="Simison M."/>
            <person name="Cherry J.M."/>
        </authorList>
    </citation>
    <scope>GENOME REANNOTATION</scope>
    <source>
        <strain>ATCC 204508 / S288c</strain>
    </source>
</reference>
<reference key="4">
    <citation type="journal article" date="2007" name="Genome Res.">
        <title>Approaching a complete repository of sequence-verified protein-encoding clones for Saccharomyces cerevisiae.</title>
        <authorList>
            <person name="Hu Y."/>
            <person name="Rolfs A."/>
            <person name="Bhullar B."/>
            <person name="Murthy T.V.S."/>
            <person name="Zhu C."/>
            <person name="Berger M.F."/>
            <person name="Camargo A.A."/>
            <person name="Kelley F."/>
            <person name="McCarron S."/>
            <person name="Jepson D."/>
            <person name="Richardson A."/>
            <person name="Raphael J."/>
            <person name="Moreira D."/>
            <person name="Taycher E."/>
            <person name="Zuo D."/>
            <person name="Mohr S."/>
            <person name="Kane M.F."/>
            <person name="Williamson J."/>
            <person name="Simpson A.J.G."/>
            <person name="Bulyk M.L."/>
            <person name="Harlow E."/>
            <person name="Marsischky G."/>
            <person name="Kolodner R.D."/>
            <person name="LaBaer J."/>
        </authorList>
    </citation>
    <scope>NUCLEOTIDE SEQUENCE [GENOMIC DNA]</scope>
    <source>
        <strain>ATCC 204508 / S288c</strain>
    </source>
</reference>
<reference key="5">
    <citation type="journal article" date="2002" name="Nat. Genet.">
        <title>Sir2p and Sas2p opposingly regulate acetylation of yeast histone H4 lysine 16 and spreading of heterochromatin.</title>
        <authorList>
            <person name="Suka N."/>
            <person name="Luo K."/>
            <person name="Grunstein M."/>
        </authorList>
    </citation>
    <scope>INDUCTION</scope>
</reference>
<feature type="chain" id="PRO_0000202700" description="Putative uncharacterized protein YFR056C">
    <location>
        <begin position="1"/>
        <end position="122"/>
    </location>
</feature>
<feature type="transmembrane region" description="Helical" evidence="1">
    <location>
        <begin position="36"/>
        <end position="56"/>
    </location>
</feature>
<feature type="transmembrane region" description="Helical" evidence="1">
    <location>
        <begin position="72"/>
        <end position="92"/>
    </location>
</feature>
<comment type="subcellular location">
    <subcellularLocation>
        <location evidence="3">Membrane</location>
        <topology evidence="3">Multi-pass membrane protein</topology>
    </subcellularLocation>
</comment>
<comment type="induction">
    <text evidence="2">Silenced by SIR3.</text>
</comment>
<comment type="miscellaneous">
    <text evidence="3">Partially overlaps YFR055W.</text>
</comment>
<comment type="caution">
    <text evidence="4">Product of a dubious gene prediction unlikely to encode a functional protein. Because of that it is not part of the S.cerevisiae S288c complete/reference proteome set.</text>
</comment>